<gene>
    <name evidence="1" type="primary">pyrB</name>
    <name type="ordered locus">Plav_2836</name>
</gene>
<accession>A7HX10</accession>
<feature type="chain" id="PRO_0000329110" description="Aspartate carbamoyltransferase catalytic subunit">
    <location>
        <begin position="1"/>
        <end position="327"/>
    </location>
</feature>
<feature type="binding site" evidence="1">
    <location>
        <position position="67"/>
    </location>
    <ligand>
        <name>carbamoyl phosphate</name>
        <dbReference type="ChEBI" id="CHEBI:58228"/>
    </ligand>
</feature>
<feature type="binding site" evidence="1">
    <location>
        <position position="68"/>
    </location>
    <ligand>
        <name>carbamoyl phosphate</name>
        <dbReference type="ChEBI" id="CHEBI:58228"/>
    </ligand>
</feature>
<feature type="binding site" evidence="1">
    <location>
        <position position="95"/>
    </location>
    <ligand>
        <name>L-aspartate</name>
        <dbReference type="ChEBI" id="CHEBI:29991"/>
    </ligand>
</feature>
<feature type="binding site" evidence="1">
    <location>
        <position position="117"/>
    </location>
    <ligand>
        <name>carbamoyl phosphate</name>
        <dbReference type="ChEBI" id="CHEBI:58228"/>
    </ligand>
</feature>
<feature type="binding site" evidence="1">
    <location>
        <position position="145"/>
    </location>
    <ligand>
        <name>carbamoyl phosphate</name>
        <dbReference type="ChEBI" id="CHEBI:58228"/>
    </ligand>
</feature>
<feature type="binding site" evidence="1">
    <location>
        <position position="148"/>
    </location>
    <ligand>
        <name>carbamoyl phosphate</name>
        <dbReference type="ChEBI" id="CHEBI:58228"/>
    </ligand>
</feature>
<feature type="binding site" evidence="1">
    <location>
        <position position="178"/>
    </location>
    <ligand>
        <name>L-aspartate</name>
        <dbReference type="ChEBI" id="CHEBI:29991"/>
    </ligand>
</feature>
<feature type="binding site" evidence="1">
    <location>
        <position position="232"/>
    </location>
    <ligand>
        <name>L-aspartate</name>
        <dbReference type="ChEBI" id="CHEBI:29991"/>
    </ligand>
</feature>
<feature type="binding site" evidence="1">
    <location>
        <position position="273"/>
    </location>
    <ligand>
        <name>carbamoyl phosphate</name>
        <dbReference type="ChEBI" id="CHEBI:58228"/>
    </ligand>
</feature>
<feature type="binding site" evidence="1">
    <location>
        <position position="274"/>
    </location>
    <ligand>
        <name>carbamoyl phosphate</name>
        <dbReference type="ChEBI" id="CHEBI:58228"/>
    </ligand>
</feature>
<organism>
    <name type="scientific">Parvibaculum lavamentivorans (strain DS-1 / DSM 13023 / NCIMB 13966)</name>
    <dbReference type="NCBI Taxonomy" id="402881"/>
    <lineage>
        <taxon>Bacteria</taxon>
        <taxon>Pseudomonadati</taxon>
        <taxon>Pseudomonadota</taxon>
        <taxon>Alphaproteobacteria</taxon>
        <taxon>Hyphomicrobiales</taxon>
        <taxon>Parvibaculaceae</taxon>
        <taxon>Parvibaculum</taxon>
    </lineage>
</organism>
<comment type="function">
    <text evidence="1">Catalyzes the condensation of carbamoyl phosphate and aspartate to form carbamoyl aspartate and inorganic phosphate, the committed step in the de novo pyrimidine nucleotide biosynthesis pathway.</text>
</comment>
<comment type="catalytic activity">
    <reaction evidence="1">
        <text>carbamoyl phosphate + L-aspartate = N-carbamoyl-L-aspartate + phosphate + H(+)</text>
        <dbReference type="Rhea" id="RHEA:20013"/>
        <dbReference type="ChEBI" id="CHEBI:15378"/>
        <dbReference type="ChEBI" id="CHEBI:29991"/>
        <dbReference type="ChEBI" id="CHEBI:32814"/>
        <dbReference type="ChEBI" id="CHEBI:43474"/>
        <dbReference type="ChEBI" id="CHEBI:58228"/>
        <dbReference type="EC" id="2.1.3.2"/>
    </reaction>
</comment>
<comment type="pathway">
    <text evidence="1">Pyrimidine metabolism; UMP biosynthesis via de novo pathway; (S)-dihydroorotate from bicarbonate: step 2/3.</text>
</comment>
<comment type="subunit">
    <text evidence="1">Heterododecamer (2C3:3R2) of six catalytic PyrB chains organized as two trimers (C3), and six regulatory PyrI chains organized as three dimers (R2).</text>
</comment>
<comment type="similarity">
    <text evidence="1">Belongs to the aspartate/ornithine carbamoyltransferase superfamily. ATCase family.</text>
</comment>
<comment type="sequence caution" evidence="2">
    <conflict type="erroneous initiation">
        <sequence resource="EMBL-CDS" id="ABS64443"/>
    </conflict>
</comment>
<proteinExistence type="inferred from homology"/>
<dbReference type="EC" id="2.1.3.2" evidence="1"/>
<dbReference type="EMBL" id="CP000774">
    <property type="protein sequence ID" value="ABS64443.1"/>
    <property type="status" value="ALT_INIT"/>
    <property type="molecule type" value="Genomic_DNA"/>
</dbReference>
<dbReference type="RefSeq" id="WP_041536035.1">
    <property type="nucleotide sequence ID" value="NC_009719.1"/>
</dbReference>
<dbReference type="SMR" id="A7HX10"/>
<dbReference type="STRING" id="402881.Plav_2836"/>
<dbReference type="KEGG" id="pla:Plav_2836"/>
<dbReference type="eggNOG" id="COG0540">
    <property type="taxonomic scope" value="Bacteria"/>
</dbReference>
<dbReference type="HOGENOM" id="CLU_043846_2_0_5"/>
<dbReference type="OrthoDB" id="9774690at2"/>
<dbReference type="UniPathway" id="UPA00070">
    <property type="reaction ID" value="UER00116"/>
</dbReference>
<dbReference type="Proteomes" id="UP000006377">
    <property type="component" value="Chromosome"/>
</dbReference>
<dbReference type="GO" id="GO:0005829">
    <property type="term" value="C:cytosol"/>
    <property type="evidence" value="ECO:0007669"/>
    <property type="project" value="TreeGrafter"/>
</dbReference>
<dbReference type="GO" id="GO:0016597">
    <property type="term" value="F:amino acid binding"/>
    <property type="evidence" value="ECO:0007669"/>
    <property type="project" value="InterPro"/>
</dbReference>
<dbReference type="GO" id="GO:0004070">
    <property type="term" value="F:aspartate carbamoyltransferase activity"/>
    <property type="evidence" value="ECO:0007669"/>
    <property type="project" value="UniProtKB-UniRule"/>
</dbReference>
<dbReference type="GO" id="GO:0006207">
    <property type="term" value="P:'de novo' pyrimidine nucleobase biosynthetic process"/>
    <property type="evidence" value="ECO:0007669"/>
    <property type="project" value="InterPro"/>
</dbReference>
<dbReference type="GO" id="GO:0044205">
    <property type="term" value="P:'de novo' UMP biosynthetic process"/>
    <property type="evidence" value="ECO:0007669"/>
    <property type="project" value="UniProtKB-UniRule"/>
</dbReference>
<dbReference type="GO" id="GO:0006520">
    <property type="term" value="P:amino acid metabolic process"/>
    <property type="evidence" value="ECO:0007669"/>
    <property type="project" value="InterPro"/>
</dbReference>
<dbReference type="FunFam" id="3.40.50.1370:FF:000007">
    <property type="entry name" value="Aspartate carbamoyltransferase"/>
    <property type="match status" value="1"/>
</dbReference>
<dbReference type="Gene3D" id="3.40.50.1370">
    <property type="entry name" value="Aspartate/ornithine carbamoyltransferase"/>
    <property type="match status" value="2"/>
</dbReference>
<dbReference type="HAMAP" id="MF_00001">
    <property type="entry name" value="Asp_carb_tr"/>
    <property type="match status" value="1"/>
</dbReference>
<dbReference type="InterPro" id="IPR006132">
    <property type="entry name" value="Asp/Orn_carbamoyltranf_P-bd"/>
</dbReference>
<dbReference type="InterPro" id="IPR006130">
    <property type="entry name" value="Asp/Orn_carbamoylTrfase"/>
</dbReference>
<dbReference type="InterPro" id="IPR036901">
    <property type="entry name" value="Asp/Orn_carbamoylTrfase_sf"/>
</dbReference>
<dbReference type="InterPro" id="IPR002082">
    <property type="entry name" value="Asp_carbamoyltransf"/>
</dbReference>
<dbReference type="InterPro" id="IPR006131">
    <property type="entry name" value="Asp_carbamoyltransf_Asp/Orn-bd"/>
</dbReference>
<dbReference type="NCBIfam" id="TIGR00670">
    <property type="entry name" value="asp_carb_tr"/>
    <property type="match status" value="1"/>
</dbReference>
<dbReference type="NCBIfam" id="NF002032">
    <property type="entry name" value="PRK00856.1"/>
    <property type="match status" value="1"/>
</dbReference>
<dbReference type="PANTHER" id="PTHR45753:SF6">
    <property type="entry name" value="ASPARTATE CARBAMOYLTRANSFERASE"/>
    <property type="match status" value="1"/>
</dbReference>
<dbReference type="PANTHER" id="PTHR45753">
    <property type="entry name" value="ORNITHINE CARBAMOYLTRANSFERASE, MITOCHONDRIAL"/>
    <property type="match status" value="1"/>
</dbReference>
<dbReference type="Pfam" id="PF00185">
    <property type="entry name" value="OTCace"/>
    <property type="match status" value="1"/>
</dbReference>
<dbReference type="Pfam" id="PF02729">
    <property type="entry name" value="OTCace_N"/>
    <property type="match status" value="1"/>
</dbReference>
<dbReference type="PRINTS" id="PR00100">
    <property type="entry name" value="AOTCASE"/>
</dbReference>
<dbReference type="PRINTS" id="PR00101">
    <property type="entry name" value="ATCASE"/>
</dbReference>
<dbReference type="SUPFAM" id="SSF53671">
    <property type="entry name" value="Aspartate/ornithine carbamoyltransferase"/>
    <property type="match status" value="1"/>
</dbReference>
<dbReference type="PROSITE" id="PS00097">
    <property type="entry name" value="CARBAMOYLTRANSFERASE"/>
    <property type="match status" value="1"/>
</dbReference>
<sequence length="327" mass="35674">MTSAEKQLQPLFPHRHLLGIEGLSPTDITSLLDLADTYVEQNRQVDKKGSVLRGRTQINLFFEASTRTQSSFELAGKRLGADVMNMSVSSSSVKKGETLIDTAVTLNAMHPDLIIIRHQNSGAVELLAQKVSCSVINAGDGAHEHPTQALLDALTIRRRKGRLQGLIVAICGDILHSRVARSNILLLNAMGARVRVVAPPTLLPAGIERLGVEVFHDMAKGLEGVDIVMMLRLQLERMAGSYVPSQREYFHFYGLDYAKLAHAKPDALVMHPGPMNRGVEIDSAVADDIDRSLIREQVEMGVAVRMAVLDALSRNLPNELPLAGGRS</sequence>
<protein>
    <recommendedName>
        <fullName evidence="1">Aspartate carbamoyltransferase catalytic subunit</fullName>
        <ecNumber evidence="1">2.1.3.2</ecNumber>
    </recommendedName>
    <alternativeName>
        <fullName evidence="1">Aspartate transcarbamylase</fullName>
        <shortName evidence="1">ATCase</shortName>
    </alternativeName>
</protein>
<evidence type="ECO:0000255" key="1">
    <source>
        <dbReference type="HAMAP-Rule" id="MF_00001"/>
    </source>
</evidence>
<evidence type="ECO:0000305" key="2"/>
<name>PYRB_PARL1</name>
<reference key="1">
    <citation type="journal article" date="2011" name="Stand. Genomic Sci.">
        <title>Complete genome sequence of Parvibaculum lavamentivorans type strain (DS-1(T)).</title>
        <authorList>
            <person name="Schleheck D."/>
            <person name="Weiss M."/>
            <person name="Pitluck S."/>
            <person name="Bruce D."/>
            <person name="Land M.L."/>
            <person name="Han S."/>
            <person name="Saunders E."/>
            <person name="Tapia R."/>
            <person name="Detter C."/>
            <person name="Brettin T."/>
            <person name="Han J."/>
            <person name="Woyke T."/>
            <person name="Goodwin L."/>
            <person name="Pennacchio L."/>
            <person name="Nolan M."/>
            <person name="Cook A.M."/>
            <person name="Kjelleberg S."/>
            <person name="Thomas T."/>
        </authorList>
    </citation>
    <scope>NUCLEOTIDE SEQUENCE [LARGE SCALE GENOMIC DNA]</scope>
    <source>
        <strain>DS-1 / DSM 13023 / NCIMB 13966</strain>
    </source>
</reference>
<keyword id="KW-0665">Pyrimidine biosynthesis</keyword>
<keyword id="KW-1185">Reference proteome</keyword>
<keyword id="KW-0808">Transferase</keyword>